<accession>Q04LC5</accession>
<reference key="1">
    <citation type="journal article" date="2007" name="J. Bacteriol.">
        <title>Genome sequence of Avery's virulent serotype 2 strain D39 of Streptococcus pneumoniae and comparison with that of unencapsulated laboratory strain R6.</title>
        <authorList>
            <person name="Lanie J.A."/>
            <person name="Ng W.-L."/>
            <person name="Kazmierczak K.M."/>
            <person name="Andrzejewski T.M."/>
            <person name="Davidsen T.M."/>
            <person name="Wayne K.J."/>
            <person name="Tettelin H."/>
            <person name="Glass J.I."/>
            <person name="Winkler M.E."/>
        </authorList>
    </citation>
    <scope>NUCLEOTIDE SEQUENCE [LARGE SCALE GENOMIC DNA]</scope>
    <source>
        <strain>D39 / NCTC 7466</strain>
    </source>
</reference>
<comment type="function">
    <text evidence="1">Specifically methylates guanosine-37 in various tRNAs.</text>
</comment>
<comment type="catalytic activity">
    <reaction evidence="1">
        <text>guanosine(37) in tRNA + S-adenosyl-L-methionine = N(1)-methylguanosine(37) in tRNA + S-adenosyl-L-homocysteine + H(+)</text>
        <dbReference type="Rhea" id="RHEA:36899"/>
        <dbReference type="Rhea" id="RHEA-COMP:10145"/>
        <dbReference type="Rhea" id="RHEA-COMP:10147"/>
        <dbReference type="ChEBI" id="CHEBI:15378"/>
        <dbReference type="ChEBI" id="CHEBI:57856"/>
        <dbReference type="ChEBI" id="CHEBI:59789"/>
        <dbReference type="ChEBI" id="CHEBI:73542"/>
        <dbReference type="ChEBI" id="CHEBI:74269"/>
        <dbReference type="EC" id="2.1.1.228"/>
    </reaction>
</comment>
<comment type="subunit">
    <text evidence="1">Homodimer.</text>
</comment>
<comment type="subcellular location">
    <subcellularLocation>
        <location evidence="1">Cytoplasm</location>
    </subcellularLocation>
</comment>
<comment type="similarity">
    <text evidence="1">Belongs to the RNA methyltransferase TrmD family.</text>
</comment>
<feature type="chain" id="PRO_1000006526" description="tRNA (guanine-N(1)-)-methyltransferase">
    <location>
        <begin position="1"/>
        <end position="239"/>
    </location>
</feature>
<feature type="binding site" evidence="1">
    <location>
        <position position="108"/>
    </location>
    <ligand>
        <name>S-adenosyl-L-methionine</name>
        <dbReference type="ChEBI" id="CHEBI:59789"/>
    </ligand>
</feature>
<feature type="binding site" evidence="1">
    <location>
        <begin position="127"/>
        <end position="132"/>
    </location>
    <ligand>
        <name>S-adenosyl-L-methionine</name>
        <dbReference type="ChEBI" id="CHEBI:59789"/>
    </ligand>
</feature>
<evidence type="ECO:0000255" key="1">
    <source>
        <dbReference type="HAMAP-Rule" id="MF_00605"/>
    </source>
</evidence>
<organism>
    <name type="scientific">Streptococcus pneumoniae serotype 2 (strain D39 / NCTC 7466)</name>
    <dbReference type="NCBI Taxonomy" id="373153"/>
    <lineage>
        <taxon>Bacteria</taxon>
        <taxon>Bacillati</taxon>
        <taxon>Bacillota</taxon>
        <taxon>Bacilli</taxon>
        <taxon>Lactobacillales</taxon>
        <taxon>Streptococcaceae</taxon>
        <taxon>Streptococcus</taxon>
    </lineage>
</organism>
<keyword id="KW-0963">Cytoplasm</keyword>
<keyword id="KW-0489">Methyltransferase</keyword>
<keyword id="KW-1185">Reference proteome</keyword>
<keyword id="KW-0949">S-adenosyl-L-methionine</keyword>
<keyword id="KW-0808">Transferase</keyword>
<keyword id="KW-0819">tRNA processing</keyword>
<dbReference type="EC" id="2.1.1.228" evidence="1"/>
<dbReference type="EMBL" id="CP000410">
    <property type="protein sequence ID" value="ABJ55191.1"/>
    <property type="molecule type" value="Genomic_DNA"/>
</dbReference>
<dbReference type="RefSeq" id="WP_000686926.1">
    <property type="nucleotide sequence ID" value="NZ_JAMLJR010000001.1"/>
</dbReference>
<dbReference type="SMR" id="Q04LC5"/>
<dbReference type="PaxDb" id="373153-SPD_0679"/>
<dbReference type="KEGG" id="spd:SPD_0679"/>
<dbReference type="eggNOG" id="COG0336">
    <property type="taxonomic scope" value="Bacteria"/>
</dbReference>
<dbReference type="HOGENOM" id="CLU_047363_0_1_9"/>
<dbReference type="BioCyc" id="SPNE373153:G1G6V-749-MONOMER"/>
<dbReference type="Proteomes" id="UP000001452">
    <property type="component" value="Chromosome"/>
</dbReference>
<dbReference type="GO" id="GO:0005829">
    <property type="term" value="C:cytosol"/>
    <property type="evidence" value="ECO:0007669"/>
    <property type="project" value="TreeGrafter"/>
</dbReference>
<dbReference type="GO" id="GO:0052906">
    <property type="term" value="F:tRNA (guanine(37)-N1)-methyltransferase activity"/>
    <property type="evidence" value="ECO:0007669"/>
    <property type="project" value="UniProtKB-UniRule"/>
</dbReference>
<dbReference type="GO" id="GO:0002939">
    <property type="term" value="P:tRNA N1-guanine methylation"/>
    <property type="evidence" value="ECO:0007669"/>
    <property type="project" value="TreeGrafter"/>
</dbReference>
<dbReference type="CDD" id="cd18080">
    <property type="entry name" value="TrmD-like"/>
    <property type="match status" value="1"/>
</dbReference>
<dbReference type="FunFam" id="1.10.1270.20:FF:000001">
    <property type="entry name" value="tRNA (guanine-N(1)-)-methyltransferase"/>
    <property type="match status" value="1"/>
</dbReference>
<dbReference type="FunFam" id="3.40.1280.10:FF:000001">
    <property type="entry name" value="tRNA (guanine-N(1)-)-methyltransferase"/>
    <property type="match status" value="1"/>
</dbReference>
<dbReference type="Gene3D" id="3.40.1280.10">
    <property type="match status" value="1"/>
</dbReference>
<dbReference type="Gene3D" id="1.10.1270.20">
    <property type="entry name" value="tRNA(m1g37)methyltransferase, domain 2"/>
    <property type="match status" value="1"/>
</dbReference>
<dbReference type="HAMAP" id="MF_00605">
    <property type="entry name" value="TrmD"/>
    <property type="match status" value="1"/>
</dbReference>
<dbReference type="InterPro" id="IPR029028">
    <property type="entry name" value="Alpha/beta_knot_MTases"/>
</dbReference>
<dbReference type="InterPro" id="IPR023148">
    <property type="entry name" value="tRNA_m1G_MeTrfase_C_sf"/>
</dbReference>
<dbReference type="InterPro" id="IPR002649">
    <property type="entry name" value="tRNA_m1G_MeTrfase_TrmD"/>
</dbReference>
<dbReference type="InterPro" id="IPR029026">
    <property type="entry name" value="tRNA_m1G_MTases_N"/>
</dbReference>
<dbReference type="InterPro" id="IPR016009">
    <property type="entry name" value="tRNA_MeTrfase_TRMD/TRM10"/>
</dbReference>
<dbReference type="NCBIfam" id="NF000648">
    <property type="entry name" value="PRK00026.1"/>
    <property type="match status" value="1"/>
</dbReference>
<dbReference type="NCBIfam" id="TIGR00088">
    <property type="entry name" value="trmD"/>
    <property type="match status" value="1"/>
</dbReference>
<dbReference type="PANTHER" id="PTHR46417">
    <property type="entry name" value="TRNA (GUANINE-N(1)-)-METHYLTRANSFERASE"/>
    <property type="match status" value="1"/>
</dbReference>
<dbReference type="PANTHER" id="PTHR46417:SF1">
    <property type="entry name" value="TRNA (GUANINE-N(1)-)-METHYLTRANSFERASE"/>
    <property type="match status" value="1"/>
</dbReference>
<dbReference type="Pfam" id="PF01746">
    <property type="entry name" value="tRNA_m1G_MT"/>
    <property type="match status" value="1"/>
</dbReference>
<dbReference type="PIRSF" id="PIRSF000386">
    <property type="entry name" value="tRNA_mtase"/>
    <property type="match status" value="1"/>
</dbReference>
<dbReference type="SUPFAM" id="SSF75217">
    <property type="entry name" value="alpha/beta knot"/>
    <property type="match status" value="1"/>
</dbReference>
<protein>
    <recommendedName>
        <fullName evidence="1">tRNA (guanine-N(1)-)-methyltransferase</fullName>
        <ecNumber evidence="1">2.1.1.228</ecNumber>
    </recommendedName>
    <alternativeName>
        <fullName evidence="1">M1G-methyltransferase</fullName>
    </alternativeName>
    <alternativeName>
        <fullName evidence="1">tRNA [GM37] methyltransferase</fullName>
    </alternativeName>
</protein>
<name>TRMD_STRP2</name>
<sequence length="239" mass="27661">MKIDILTLFPEMFSPLEHSIVGKAREKGLLDIQYHNFRENAEKARHVDDEPYGGGQGMLLRVQPIFDSFDAIEKKNPRVILLDPAGKQFDQAYAEDLAQEEELIFICGHYEGYDERIKTLVTDEISLGDYVLTGGELAAMTMIDATVRLIPEVIGKESSHQDDSFSSGLLEYPQYTRPYDYRGMVVPDVLMSGHHEKIRQWRLYESLKKTYERRPDLLEHYQLTVEEEKMLAEIKENKE</sequence>
<proteinExistence type="inferred from homology"/>
<gene>
    <name evidence="1" type="primary">trmD</name>
    <name type="ordered locus">SPD_0679</name>
</gene>